<feature type="chain" id="PRO_0000418591" description="NADPH-dependent codeinone reductase 1-1">
    <location>
        <begin position="1"/>
        <end position="321"/>
    </location>
</feature>
<feature type="active site" description="Proton donor" evidence="1">
    <location>
        <position position="56"/>
    </location>
</feature>
<feature type="active site" description="Proton donor" evidence="2">
    <location>
        <position position="119"/>
    </location>
</feature>
<feature type="binding site" evidence="2">
    <location>
        <position position="27"/>
    </location>
    <ligand>
        <name>NADPH</name>
        <dbReference type="ChEBI" id="CHEBI:57783"/>
    </ligand>
</feature>
<feature type="binding site" evidence="2">
    <location>
        <position position="51"/>
    </location>
    <ligand>
        <name>NADPH</name>
        <dbReference type="ChEBI" id="CHEBI:57783"/>
    </ligand>
</feature>
<feature type="binding site" evidence="1">
    <location>
        <position position="119"/>
    </location>
    <ligand>
        <name>substrate</name>
    </ligand>
</feature>
<feature type="binding site" evidence="2">
    <location>
        <position position="187"/>
    </location>
    <ligand>
        <name>NADPH</name>
        <dbReference type="ChEBI" id="CHEBI:57783"/>
    </ligand>
</feature>
<feature type="binding site" evidence="2">
    <location>
        <position position="214"/>
    </location>
    <ligand>
        <name>NADPH</name>
        <dbReference type="ChEBI" id="CHEBI:57783"/>
    </ligand>
</feature>
<feature type="binding site" evidence="2">
    <location>
        <position position="216"/>
    </location>
    <ligand>
        <name>NADPH</name>
        <dbReference type="ChEBI" id="CHEBI:57783"/>
    </ligand>
</feature>
<feature type="binding site" evidence="2">
    <location>
        <position position="264"/>
    </location>
    <ligand>
        <name>NADPH</name>
        <dbReference type="ChEBI" id="CHEBI:57783"/>
    </ligand>
</feature>
<feature type="binding site" evidence="2">
    <location>
        <position position="269"/>
    </location>
    <ligand>
        <name>NADPH</name>
        <dbReference type="ChEBI" id="CHEBI:57783"/>
    </ligand>
</feature>
<feature type="site" description="Lowers pKa of active site Tyr" evidence="2">
    <location>
        <position position="86"/>
    </location>
</feature>
<feature type="sequence conflict" description="In Ref. 1; AAF13736." evidence="16" ref="1">
    <original>S</original>
    <variation>T</variation>
    <location>
        <position position="58"/>
    </location>
</feature>
<keyword id="KW-0017">Alkaloid metabolism</keyword>
<keyword id="KW-0963">Cytoplasm</keyword>
<keyword id="KW-0903">Direct protein sequencing</keyword>
<keyword id="KW-0521">NADP</keyword>
<keyword id="KW-0560">Oxidoreductase</keyword>
<keyword id="KW-1185">Reference proteome</keyword>
<reference key="1">
    <citation type="journal article" date="1999" name="Plant J.">
        <title>Molecular cloning and functional expression of codeinone reductase: the penultimate enzyme in morphine biosynthesis in the opium poppy Papaver somniferum.</title>
        <authorList>
            <person name="Unterlinner B."/>
            <person name="Lenz R."/>
            <person name="Kutchan T.M."/>
        </authorList>
    </citation>
    <scope>NUCLEOTIDE SEQUENCE [MRNA]</scope>
    <scope>PROTEIN SEQUENCE OF 130-135; 172-177; 233-243 AND 245-248</scope>
    <scope>FUNCTION</scope>
    <scope>TISSUE SPECIFICITY</scope>
    <scope>BIOPHYSICOCHEMICAL PROPERTIES</scope>
    <scope>CATALYTIC ACTIVITY</scope>
    <scope>PATHWAY</scope>
</reference>
<reference key="2">
    <citation type="journal article" date="2018" name="Science">
        <title>The opium poppy genome and morphinan production.</title>
        <authorList>
            <person name="Guo L."/>
            <person name="Winzer T."/>
            <person name="Yang X."/>
            <person name="Li Y."/>
            <person name="Ning Z."/>
            <person name="He Z."/>
            <person name="Teodor R."/>
            <person name="Lu Y."/>
            <person name="Bowser T.A."/>
            <person name="Graham I.A."/>
            <person name="Ye K."/>
        </authorList>
    </citation>
    <scope>NUCLEOTIDE SEQUENCE [LARGE SCALE GENOMIC DNA]</scope>
    <source>
        <strain>cv. HN1</strain>
        <tissue>Leaf</tissue>
    </source>
</reference>
<reference key="3">
    <citation type="journal article" date="2000" name="Electrophoresis">
        <title>Characterization of proteins in latex of the opium poppy (Papaver somniferum) using two-dimensional gel electrophoresis and microsequencing.</title>
        <authorList>
            <person name="Decker G."/>
            <person name="Wanner G."/>
            <person name="Zenk M.H."/>
            <person name="Lottspeich F."/>
        </authorList>
    </citation>
    <scope>IDENTIFICATION BY MASS SPECTROMETRY</scope>
    <scope>SUBCELLULAR LOCATION</scope>
    <scope>TISSUE SPECIFICITY</scope>
</reference>
<reference key="4">
    <citation type="journal article" date="2003" name="Plant Cell">
        <title>A tale of three cell types: alkaloid biosynthesis is localized to sieve elements in opium poppy.</title>
        <authorList>
            <person name="Bird D.A."/>
            <person name="Franceschi V.R."/>
            <person name="Facchini P.J."/>
        </authorList>
    </citation>
    <scope>TISSUE SPECIFICITY</scope>
    <scope>SUBCELLULAR LOCATION</scope>
</reference>
<reference key="5">
    <citation type="journal article" date="2004" name="Nat. Biotechnol.">
        <title>RNAi-mediated replacement of morphine with the nonnarcotic alkaloid reticuline in opium poppy.</title>
        <authorList>
            <person name="Allen R.S."/>
            <person name="Millgate A.G."/>
            <person name="Chitty J.A."/>
            <person name="Thisleton J."/>
            <person name="Miller J.A."/>
            <person name="Fist A.J."/>
            <person name="Gerlach W.L."/>
            <person name="Larkin P.J."/>
        </authorList>
    </citation>
    <scope>FUNCTION</scope>
    <scope>DISRUPTION PHENOTYPE</scope>
</reference>
<reference key="6">
    <citation type="journal article" date="2004" name="Proc. Natl. Acad. Sci. U.S.A.">
        <title>The roles of latex and the vascular bundle in morphine biosynthesis in the opium poppy, Papaver somniferum.</title>
        <authorList>
            <person name="Weid M."/>
            <person name="Ziegler J."/>
            <person name="Kutchan T.M."/>
        </authorList>
    </citation>
    <scope>TISSUE SPECIFICITY</scope>
</reference>
<reference key="7">
    <citation type="journal article" date="2006" name="Plant J.">
        <title>The role of phloem sieve elements and laticifers in the biosynthesis and accumulation of alkaloids in opium poppy.</title>
        <authorList>
            <person name="Samanani N."/>
            <person name="Alcantara J."/>
            <person name="Bourgault R."/>
            <person name="Zulak K.G."/>
            <person name="Facchini P.J."/>
        </authorList>
    </citation>
    <scope>DEVELOPMENTAL STAGE</scope>
    <source>
        <strain>cv. Louisiana</strain>
        <strain>cv. Marianne</strain>
    </source>
</reference>
<reference key="8">
    <citation type="journal article" date="2007" name="Plant Biotechnol. J.">
        <title>Increasing morphinan alkaloid production by over-expressing codeinone reductase in transgenic Papaver somniferum.</title>
        <authorList>
            <person name="Larkin P.J."/>
            <person name="Miller J.A.C."/>
            <person name="Allen R.S."/>
            <person name="Chitty J.A."/>
            <person name="Gerlach W.L."/>
            <person name="Frick S."/>
            <person name="Kutchan T.M."/>
            <person name="Fist A.J."/>
        </authorList>
    </citation>
    <scope>FUNCTION</scope>
    <scope>PATHWAY</scope>
</reference>
<reference key="9">
    <citation type="journal article" date="2012" name="Plant J.">
        <title>Systematic knockdown of morphine pathway enzymes in opium poppy using virus-induced gene silencing.</title>
        <authorList>
            <person name="Wijekoon C.P."/>
            <person name="Facchini P.J."/>
        </authorList>
    </citation>
    <scope>FUNCTION</scope>
    <scope>DISRUPTION PHENOTYPE</scope>
    <scope>CATALYTIC ACTIVITY</scope>
</reference>
<reference key="10">
    <citation type="journal article" date="2018" name="J. Biosci.">
        <title>Spatiotemporal oscillations of morphinan alkaloids in opium poppy.</title>
        <authorList>
            <person name="Rezaei M."/>
            <person name="Naghavi M.R."/>
            <person name="Hosseinzadeh A."/>
            <person name="Abasi A."/>
            <person name="Nasiri J."/>
        </authorList>
    </citation>
    <scope>TISSUE SPECIFICITY</scope>
    <scope>DEVELOPMENTAL STAGE</scope>
</reference>
<reference key="11">
    <citation type="journal article" date="2018" name="Plant J.">
        <title>Codeinone reductase isoforms with differential stability, efficiency and product selectivity in opium poppy.</title>
        <authorList>
            <person name="Dastmalchi M."/>
            <person name="Chang L."/>
            <person name="Torres M.A."/>
            <person name="Ng K.K.S."/>
            <person name="Facchini P.J."/>
        </authorList>
    </citation>
    <scope>NUCLEOTIDE SEQUENCE [MRNA]</scope>
    <scope>FUNCTION</scope>
    <scope>CATALYTIC ACTIVITY</scope>
    <scope>BIOTECHNOLOGY</scope>
    <scope>PATHWAY</scope>
    <source>
        <strain>cv. Bea's Choice</strain>
    </source>
</reference>
<name>COR11_PAPSO</name>
<proteinExistence type="evidence at protein level"/>
<evidence type="ECO:0000250" key="1">
    <source>
        <dbReference type="UniProtKB" id="P06632"/>
    </source>
</evidence>
<evidence type="ECO:0000250" key="2">
    <source>
        <dbReference type="UniProtKB" id="Q76L36"/>
    </source>
</evidence>
<evidence type="ECO:0000250" key="3">
    <source>
        <dbReference type="UniProtKB" id="Q9SQ68"/>
    </source>
</evidence>
<evidence type="ECO:0000269" key="4">
    <source>
    </source>
</evidence>
<evidence type="ECO:0000269" key="5">
    <source>
    </source>
</evidence>
<evidence type="ECO:0000269" key="6">
    <source>
    </source>
</evidence>
<evidence type="ECO:0000269" key="7">
    <source>
    </source>
</evidence>
<evidence type="ECO:0000269" key="8">
    <source>
    </source>
</evidence>
<evidence type="ECO:0000269" key="9">
    <source>
    </source>
</evidence>
<evidence type="ECO:0000269" key="10">
    <source>
    </source>
</evidence>
<evidence type="ECO:0000269" key="11">
    <source>
    </source>
</evidence>
<evidence type="ECO:0000269" key="12">
    <source>
    </source>
</evidence>
<evidence type="ECO:0000269" key="13">
    <source>
    </source>
</evidence>
<evidence type="ECO:0000303" key="14">
    <source>
    </source>
</evidence>
<evidence type="ECO:0000303" key="15">
    <source>
    </source>
</evidence>
<evidence type="ECO:0000305" key="16"/>
<sequence>MESNGVPMITLSSGIRMPALGMGTAETMVKGTEREKLAFLKAIEVGYRHFDTAAAYQSEECLGEAIAEALQLGLIKSRDELFITSKLWCADAHADLVLPALQNSLRNLKLDYLDLYLIHHPVSLKPGKFVNEIPKDHILPMDYKSVWAAMEECQTLGFTRAIGVCNFSCKRLQELMETANSPPVVNQVEMSPTLHQKNLREYCKANNIMITAHSVLGAVGAAWGTNAVMHSKVLHQIAVARGKSVAQVSMRWVYQQGASLVVKSFNEARMKENLKIFDWELTAEDMEKISEIPQSRTSSAAFLLSPTGPFKTEEEFWDEKD</sequence>
<accession>Q9SQ70</accession>
<gene>
    <name evidence="14" type="primary">COR1.1</name>
</gene>
<dbReference type="EC" id="1.1.1.247" evidence="4 12"/>
<dbReference type="EMBL" id="AF108432">
    <property type="protein sequence ID" value="AAF13736.1"/>
    <property type="molecule type" value="mRNA"/>
</dbReference>
<dbReference type="EMBL" id="CM010721">
    <property type="status" value="NOT_ANNOTATED_CDS"/>
    <property type="molecule type" value="Genomic_DNA"/>
</dbReference>
<dbReference type="SMR" id="Q9SQ70"/>
<dbReference type="KEGG" id="ag:AAF13736"/>
<dbReference type="BioCyc" id="MetaCyc:MONOMER-12302"/>
<dbReference type="BRENDA" id="1.1.1.247">
    <property type="organism ID" value="4515"/>
</dbReference>
<dbReference type="UniPathway" id="UPA00852"/>
<dbReference type="Proteomes" id="UP000316621">
    <property type="component" value="Chromosome 7"/>
</dbReference>
<dbReference type="GO" id="GO:0005829">
    <property type="term" value="C:cytosol"/>
    <property type="evidence" value="ECO:0000314"/>
    <property type="project" value="UniProtKB"/>
</dbReference>
<dbReference type="GO" id="GO:0047036">
    <property type="term" value="F:codeinone reductase (NADPH) activity"/>
    <property type="evidence" value="ECO:0000314"/>
    <property type="project" value="UniProtKB"/>
</dbReference>
<dbReference type="GO" id="GO:0016491">
    <property type="term" value="F:oxidoreductase activity"/>
    <property type="evidence" value="ECO:0000314"/>
    <property type="project" value="UniProtKB"/>
</dbReference>
<dbReference type="GO" id="GO:0009820">
    <property type="term" value="P:alkaloid metabolic process"/>
    <property type="evidence" value="ECO:0007669"/>
    <property type="project" value="UniProtKB-KW"/>
</dbReference>
<dbReference type="CDD" id="cd19124">
    <property type="entry name" value="AKR_AKR4A_4B"/>
    <property type="match status" value="1"/>
</dbReference>
<dbReference type="FunFam" id="3.20.20.100:FF:000013">
    <property type="entry name" value="NADPH-dependent codeinone reductase 1-1"/>
    <property type="match status" value="1"/>
</dbReference>
<dbReference type="Gene3D" id="3.20.20.100">
    <property type="entry name" value="NADP-dependent oxidoreductase domain"/>
    <property type="match status" value="1"/>
</dbReference>
<dbReference type="InterPro" id="IPR020471">
    <property type="entry name" value="AKR"/>
</dbReference>
<dbReference type="InterPro" id="IPR044497">
    <property type="entry name" value="AKR4A/B"/>
</dbReference>
<dbReference type="InterPro" id="IPR018170">
    <property type="entry name" value="Aldo/ket_reductase_CS"/>
</dbReference>
<dbReference type="InterPro" id="IPR023210">
    <property type="entry name" value="NADP_OxRdtase_dom"/>
</dbReference>
<dbReference type="InterPro" id="IPR036812">
    <property type="entry name" value="NADP_OxRdtase_dom_sf"/>
</dbReference>
<dbReference type="PANTHER" id="PTHR11732">
    <property type="entry name" value="ALDO/KETO REDUCTASE"/>
    <property type="match status" value="1"/>
</dbReference>
<dbReference type="Pfam" id="PF00248">
    <property type="entry name" value="Aldo_ket_red"/>
    <property type="match status" value="1"/>
</dbReference>
<dbReference type="PIRSF" id="PIRSF000097">
    <property type="entry name" value="AKR"/>
    <property type="match status" value="1"/>
</dbReference>
<dbReference type="PRINTS" id="PR00069">
    <property type="entry name" value="ALDKETRDTASE"/>
</dbReference>
<dbReference type="SUPFAM" id="SSF51430">
    <property type="entry name" value="NAD(P)-linked oxidoreductase"/>
    <property type="match status" value="1"/>
</dbReference>
<dbReference type="PROSITE" id="PS00798">
    <property type="entry name" value="ALDOKETO_REDUCTASE_1"/>
    <property type="match status" value="1"/>
</dbReference>
<dbReference type="PROSITE" id="PS00062">
    <property type="entry name" value="ALDOKETO_REDUCTASE_2"/>
    <property type="match status" value="1"/>
</dbReference>
<dbReference type="PROSITE" id="PS00063">
    <property type="entry name" value="ALDOKETO_REDUCTASE_3"/>
    <property type="match status" value="1"/>
</dbReference>
<comment type="function">
    <text evidence="3 4 8 10 11 12">NADPH-dependent reductase involved in biosynthesis of morphinan-type benzylisoquinoline and opiate alkaloids natural products (PubMed:10417697, PubMed:15543134, PubMed:17207254, PubMed:29779229). Reduces codeinone to codeine in the penultimate step in morphine biosynthesis (PubMed:10417697, PubMed:15543134, PubMed:22098111, PubMed:29779229). Can use morphinone, hydrocodone and hydromorphone as substrate during reductive reaction with NADPH as cofactor, and morphine and dihydrocodeine as substrate during oxidative reaction with NADP as cofactor (PubMed:10417697). Converts morphinone to morphine, and neomorphinone to neomorphine (By similarity). Reduces irreversibly neopinone, a spontaneous isomer of codeinone, to neopine; in planta, neopine levels are limited to low levels (PubMed:29779229).</text>
</comment>
<comment type="catalytic activity">
    <reaction evidence="4 11 12">
        <text>codeine + NADP(+) = codeinone + NADPH + H(+)</text>
        <dbReference type="Rhea" id="RHEA:19209"/>
        <dbReference type="ChEBI" id="CHEBI:15378"/>
        <dbReference type="ChEBI" id="CHEBI:57783"/>
        <dbReference type="ChEBI" id="CHEBI:57871"/>
        <dbReference type="ChEBI" id="CHEBI:58349"/>
        <dbReference type="ChEBI" id="CHEBI:58473"/>
        <dbReference type="EC" id="1.1.1.247"/>
    </reaction>
    <physiologicalReaction direction="left-to-right" evidence="4 12">
        <dbReference type="Rhea" id="RHEA:19210"/>
    </physiologicalReaction>
    <physiologicalReaction direction="right-to-left" evidence="4 12">
        <dbReference type="Rhea" id="RHEA:19211"/>
    </physiologicalReaction>
</comment>
<comment type="catalytic activity">
    <reaction evidence="12">
        <text>neopine + NADP(+) = neopinone + NADPH + H(+)</text>
        <dbReference type="Rhea" id="RHEA:75135"/>
        <dbReference type="ChEBI" id="CHEBI:15378"/>
        <dbReference type="ChEBI" id="CHEBI:57783"/>
        <dbReference type="ChEBI" id="CHEBI:58349"/>
        <dbReference type="ChEBI" id="CHEBI:59950"/>
        <dbReference type="ChEBI" id="CHEBI:194190"/>
        <dbReference type="EC" id="1.1.1.247"/>
    </reaction>
    <physiologicalReaction direction="right-to-left" evidence="12">
        <dbReference type="Rhea" id="RHEA:75137"/>
    </physiologicalReaction>
</comment>
<comment type="catalytic activity">
    <reaction evidence="12">
        <text>morphine + NADP(+) = morphinone + NADPH + H(+)</text>
        <dbReference type="Rhea" id="RHEA:14321"/>
        <dbReference type="ChEBI" id="CHEBI:15378"/>
        <dbReference type="ChEBI" id="CHEBI:57728"/>
        <dbReference type="ChEBI" id="CHEBI:57783"/>
        <dbReference type="ChEBI" id="CHEBI:58097"/>
        <dbReference type="ChEBI" id="CHEBI:58349"/>
    </reaction>
    <physiologicalReaction direction="left-to-right" evidence="12">
        <dbReference type="Rhea" id="RHEA:14322"/>
    </physiologicalReaction>
    <physiologicalReaction direction="right-to-left" evidence="12">
        <dbReference type="Rhea" id="RHEA:14323"/>
    </physiologicalReaction>
</comment>
<comment type="catalytic activity">
    <reaction evidence="12">
        <text>neomorphine + NADP(+) = neomorphinone + NADPH + H(+)</text>
        <dbReference type="Rhea" id="RHEA:75971"/>
        <dbReference type="ChEBI" id="CHEBI:15378"/>
        <dbReference type="ChEBI" id="CHEBI:57783"/>
        <dbReference type="ChEBI" id="CHEBI:58349"/>
        <dbReference type="ChEBI" id="CHEBI:194188"/>
        <dbReference type="ChEBI" id="CHEBI:194513"/>
    </reaction>
    <physiologicalReaction direction="right-to-left" evidence="12">
        <dbReference type="Rhea" id="RHEA:75973"/>
    </physiologicalReaction>
</comment>
<comment type="biophysicochemical properties">
    <kinetics>
        <KM evidence="4">220 uM for codeine (at pH 9.0 and 30 degrees Celsius)</KM>
        <KM evidence="4">58 uM for codeinone (at pH 9.0 and 30 degrees Celsius)</KM>
        <KM evidence="4">180 uM for NADPH (at pH 9.0 and 30 degrees Celsius)</KM>
        <KM evidence="4">53 uM for NADP (at pH 9.0 and 30 degrees Celsius)</KM>
    </kinetics>
    <phDependence>
        <text evidence="4">Optimum pH is 6.8 for reduction (forward reaction) and 9.0 for oxidation (reverse reaction).</text>
    </phDependence>
    <temperatureDependence>
        <text evidence="4">Optimum temperature is 28 degrees Celsius for reduction (forward reaction) and 30 degrees Celsius for reduction (reverse reaction).</text>
    </temperatureDependence>
</comment>
<comment type="pathway">
    <text evidence="4 10 12">Alkaloid biosynthesis; morphine biosynthesis.</text>
</comment>
<comment type="subcellular location">
    <subcellularLocation>
        <location evidence="5">Cytoplasm</location>
        <location evidence="5">Cytosol</location>
    </subcellularLocation>
    <text evidence="5 6">Present in the cytosolic part of laticifer cells that secrete latex (PubMed:11079569). Localized to the parietal region of the sieve element cytoplasm (PubMed:14508000).</text>
</comment>
<comment type="tissue specificity">
    <text evidence="4 5 6 7 13">Latex secreting cells (laticifer cells). Expressed constitutively and ubiquitously with highest levels in capsules (PubMed:15353584, PubMed:29872026). Restricted to the parietal region of sieve elements adjacent or proximal to laticifers in roots, stems, leaves and carpels (PubMed:14508000).</text>
</comment>
<comment type="developmental stage">
    <text evidence="9 13">Increases rapidly between 1 and 4 days after seed germination (PubMed:16813579). In roots, accumulates transiently during flower buds initiation (PubMed:29872026). In leaves, mainly observed after budding (PubMed:29872026). High levels in stems and capsules (walls and content), especially after flowering (PubMed:29872026).</text>
</comment>
<comment type="disruption phenotype">
    <text evidence="8 11">Plants silenced for all codeinone reductase proteins accumulate the precursor alkaloid (S)-reticuline at the expense of morphine, codeine, oripavine and thebaine.</text>
</comment>
<comment type="biotechnology">
    <text evidence="12">In yeast (Saccharomyces cerevisiae) engineered to produce opiate alkaloids, the expression of COR proteins leads to the accumulation of neopine and neomorphine as major products.</text>
</comment>
<comment type="similarity">
    <text evidence="16">Belongs to the aldo/keto reductase family.</text>
</comment>
<organism>
    <name type="scientific">Papaver somniferum</name>
    <name type="common">Opium poppy</name>
    <dbReference type="NCBI Taxonomy" id="3469"/>
    <lineage>
        <taxon>Eukaryota</taxon>
        <taxon>Viridiplantae</taxon>
        <taxon>Streptophyta</taxon>
        <taxon>Embryophyta</taxon>
        <taxon>Tracheophyta</taxon>
        <taxon>Spermatophyta</taxon>
        <taxon>Magnoliopsida</taxon>
        <taxon>Ranunculales</taxon>
        <taxon>Papaveraceae</taxon>
        <taxon>Papaveroideae</taxon>
        <taxon>Papaver</taxon>
    </lineage>
</organism>
<protein>
    <recommendedName>
        <fullName evidence="14">NADPH-dependent codeinone reductase 1-1</fullName>
        <shortName evidence="15">PsCor1.1</shortName>
        <ecNumber evidence="4 12">1.1.1.247</ecNumber>
    </recommendedName>
</protein>